<feature type="chain" id="PRO_0000100316" description="Major cold shock protein CspA">
    <location>
        <begin position="1"/>
        <end position="69"/>
    </location>
</feature>
<feature type="domain" description="CSD">
    <location>
        <begin position="7"/>
        <end position="66"/>
    </location>
</feature>
<reference key="1">
    <citation type="submission" date="1997-01" db="EMBL/GenBank/DDBJ databases">
        <title>Gene duplication: a mechanism for the evolution of bacterial major cold shock protein families.</title>
        <authorList>
            <person name="Francis K.P."/>
            <person name="Stewart G.S.A.B."/>
        </authorList>
    </citation>
    <scope>NUCLEOTIDE SEQUENCE [GENOMIC DNA]</scope>
    <source>
        <strain>ATCC 15692 / DSM 22644 / CIP 104116 / JCM 14847 / LMG 12228 / 1C / PRS 101 / PAO1</strain>
    </source>
</reference>
<reference key="2">
    <citation type="journal article" date="2000" name="Nature">
        <title>Complete genome sequence of Pseudomonas aeruginosa PAO1, an opportunistic pathogen.</title>
        <authorList>
            <person name="Stover C.K."/>
            <person name="Pham X.-Q.T."/>
            <person name="Erwin A.L."/>
            <person name="Mizoguchi S.D."/>
            <person name="Warrener P."/>
            <person name="Hickey M.J."/>
            <person name="Brinkman F.S.L."/>
            <person name="Hufnagle W.O."/>
            <person name="Kowalik D.J."/>
            <person name="Lagrou M."/>
            <person name="Garber R.L."/>
            <person name="Goltry L."/>
            <person name="Tolentino E."/>
            <person name="Westbrock-Wadman S."/>
            <person name="Yuan Y."/>
            <person name="Brody L.L."/>
            <person name="Coulter S.N."/>
            <person name="Folger K.R."/>
            <person name="Kas A."/>
            <person name="Larbig K."/>
            <person name="Lim R.M."/>
            <person name="Smith K.A."/>
            <person name="Spencer D.H."/>
            <person name="Wong G.K.-S."/>
            <person name="Wu Z."/>
            <person name="Paulsen I.T."/>
            <person name="Reizer J."/>
            <person name="Saier M.H. Jr."/>
            <person name="Hancock R.E.W."/>
            <person name="Lory S."/>
            <person name="Olson M.V."/>
        </authorList>
    </citation>
    <scope>NUCLEOTIDE SEQUENCE [LARGE SCALE GENOMIC DNA]</scope>
    <source>
        <strain>ATCC 15692 / DSM 22644 / CIP 104116 / JCM 14847 / LMG 12228 / 1C / PRS 101 / PAO1</strain>
    </source>
</reference>
<evidence type="ECO:0000250" key="1"/>
<keyword id="KW-0010">Activator</keyword>
<keyword id="KW-0963">Cytoplasm</keyword>
<keyword id="KW-0238">DNA-binding</keyword>
<keyword id="KW-1185">Reference proteome</keyword>
<keyword id="KW-0346">Stress response</keyword>
<keyword id="KW-0804">Transcription</keyword>
<keyword id="KW-0805">Transcription regulation</keyword>
<gene>
    <name type="primary">cspA</name>
    <name type="ordered locus">PA3266</name>
</gene>
<comment type="subcellular location">
    <subcellularLocation>
        <location evidence="1">Cytoplasm</location>
    </subcellularLocation>
</comment>
<comment type="induction">
    <text>In response to low temperature.</text>
</comment>
<sequence>MSNRQNGTVKWFNDAKGFGFITPESGNDLFVHFRSIQGTGFKSLQEGQKVSFVVVNGQKGLQADEVQVV</sequence>
<dbReference type="EMBL" id="U82822">
    <property type="protein sequence ID" value="AAB40922.1"/>
    <property type="molecule type" value="Genomic_DNA"/>
</dbReference>
<dbReference type="EMBL" id="AE004091">
    <property type="protein sequence ID" value="AAG06654.1"/>
    <property type="molecule type" value="Genomic_DNA"/>
</dbReference>
<dbReference type="PIR" id="H83236">
    <property type="entry name" value="H83236"/>
</dbReference>
<dbReference type="RefSeq" id="WP_003115568.1">
    <property type="nucleotide sequence ID" value="NZ_QZGE01000019.1"/>
</dbReference>
<dbReference type="SMR" id="P95459"/>
<dbReference type="FunCoup" id="P95459">
    <property type="interactions" value="693"/>
</dbReference>
<dbReference type="STRING" id="208964.PA3266"/>
<dbReference type="PaxDb" id="208964-PA3266"/>
<dbReference type="DNASU" id="882429"/>
<dbReference type="KEGG" id="pae:PA3266"/>
<dbReference type="PATRIC" id="fig|208964.12.peg.3415"/>
<dbReference type="PseudoCAP" id="PA3266"/>
<dbReference type="HOGENOM" id="CLU_117621_6_1_6"/>
<dbReference type="InParanoid" id="P95459"/>
<dbReference type="OrthoDB" id="9810590at2"/>
<dbReference type="PhylomeDB" id="P95459"/>
<dbReference type="BioCyc" id="PAER208964:G1FZ6-3327-MONOMER"/>
<dbReference type="Proteomes" id="UP000002438">
    <property type="component" value="Chromosome"/>
</dbReference>
<dbReference type="GO" id="GO:0005829">
    <property type="term" value="C:cytosol"/>
    <property type="evidence" value="ECO:0007669"/>
    <property type="project" value="UniProtKB-ARBA"/>
</dbReference>
<dbReference type="GO" id="GO:0003677">
    <property type="term" value="F:DNA binding"/>
    <property type="evidence" value="ECO:0007669"/>
    <property type="project" value="UniProtKB-KW"/>
</dbReference>
<dbReference type="GO" id="GO:0003676">
    <property type="term" value="F:nucleic acid binding"/>
    <property type="evidence" value="ECO:0000318"/>
    <property type="project" value="GO_Central"/>
</dbReference>
<dbReference type="GO" id="GO:0010468">
    <property type="term" value="P:regulation of gene expression"/>
    <property type="evidence" value="ECO:0000318"/>
    <property type="project" value="GO_Central"/>
</dbReference>
<dbReference type="CDD" id="cd04458">
    <property type="entry name" value="CSP_CDS"/>
    <property type="match status" value="1"/>
</dbReference>
<dbReference type="FunFam" id="2.40.50.140:FF:000006">
    <property type="entry name" value="Cold shock protein CspC"/>
    <property type="match status" value="1"/>
</dbReference>
<dbReference type="Gene3D" id="2.40.50.140">
    <property type="entry name" value="Nucleic acid-binding proteins"/>
    <property type="match status" value="1"/>
</dbReference>
<dbReference type="InterPro" id="IPR012156">
    <property type="entry name" value="Cold_shock_CspA"/>
</dbReference>
<dbReference type="InterPro" id="IPR011129">
    <property type="entry name" value="CSD"/>
</dbReference>
<dbReference type="InterPro" id="IPR019844">
    <property type="entry name" value="CSD_CS"/>
</dbReference>
<dbReference type="InterPro" id="IPR002059">
    <property type="entry name" value="CSP_DNA-bd"/>
</dbReference>
<dbReference type="InterPro" id="IPR012340">
    <property type="entry name" value="NA-bd_OB-fold"/>
</dbReference>
<dbReference type="PANTHER" id="PTHR46565">
    <property type="entry name" value="COLD SHOCK DOMAIN PROTEIN 2"/>
    <property type="match status" value="1"/>
</dbReference>
<dbReference type="PANTHER" id="PTHR46565:SF20">
    <property type="entry name" value="COLD SHOCK DOMAIN-CONTAINING PROTEIN 4"/>
    <property type="match status" value="1"/>
</dbReference>
<dbReference type="Pfam" id="PF00313">
    <property type="entry name" value="CSD"/>
    <property type="match status" value="1"/>
</dbReference>
<dbReference type="PIRSF" id="PIRSF002599">
    <property type="entry name" value="Cold_shock_A"/>
    <property type="match status" value="1"/>
</dbReference>
<dbReference type="PRINTS" id="PR00050">
    <property type="entry name" value="COLDSHOCK"/>
</dbReference>
<dbReference type="SMART" id="SM00357">
    <property type="entry name" value="CSP"/>
    <property type="match status" value="1"/>
</dbReference>
<dbReference type="SUPFAM" id="SSF50249">
    <property type="entry name" value="Nucleic acid-binding proteins"/>
    <property type="match status" value="1"/>
</dbReference>
<dbReference type="PROSITE" id="PS00352">
    <property type="entry name" value="CSD_1"/>
    <property type="match status" value="1"/>
</dbReference>
<dbReference type="PROSITE" id="PS51857">
    <property type="entry name" value="CSD_2"/>
    <property type="match status" value="1"/>
</dbReference>
<accession>P95459</accession>
<proteinExistence type="evidence at transcript level"/>
<organism>
    <name type="scientific">Pseudomonas aeruginosa (strain ATCC 15692 / DSM 22644 / CIP 104116 / JCM 14847 / LMG 12228 / 1C / PRS 101 / PAO1)</name>
    <dbReference type="NCBI Taxonomy" id="208964"/>
    <lineage>
        <taxon>Bacteria</taxon>
        <taxon>Pseudomonadati</taxon>
        <taxon>Pseudomonadota</taxon>
        <taxon>Gammaproteobacteria</taxon>
        <taxon>Pseudomonadales</taxon>
        <taxon>Pseudomonadaceae</taxon>
        <taxon>Pseudomonas</taxon>
    </lineage>
</organism>
<protein>
    <recommendedName>
        <fullName>Major cold shock protein CspA</fullName>
    </recommendedName>
</protein>
<name>CSPA_PSEAE</name>